<reference key="1">
    <citation type="journal article" date="2005" name="Proc. Natl. Acad. Sci. U.S.A.">
        <title>Complete genome sequence of Vibrio fischeri: a symbiotic bacterium with pathogenic congeners.</title>
        <authorList>
            <person name="Ruby E.G."/>
            <person name="Urbanowski M."/>
            <person name="Campbell J."/>
            <person name="Dunn A."/>
            <person name="Faini M."/>
            <person name="Gunsalus R."/>
            <person name="Lostroh P."/>
            <person name="Lupp C."/>
            <person name="McCann J."/>
            <person name="Millikan D."/>
            <person name="Schaefer A."/>
            <person name="Stabb E."/>
            <person name="Stevens A."/>
            <person name="Visick K."/>
            <person name="Whistler C."/>
            <person name="Greenberg E.P."/>
        </authorList>
    </citation>
    <scope>NUCLEOTIDE SEQUENCE [LARGE SCALE GENOMIC DNA]</scope>
    <source>
        <strain>ATCC 700601 / ES114</strain>
    </source>
</reference>
<protein>
    <recommendedName>
        <fullName evidence="1">2-C-methyl-D-erythritol 2,4-cyclodiphosphate synthase</fullName>
        <shortName evidence="1">MECDP-synthase</shortName>
        <shortName evidence="1">MECPP-synthase</shortName>
        <shortName evidence="1">MECPS</shortName>
        <ecNumber evidence="1">4.6.1.12</ecNumber>
    </recommendedName>
</protein>
<name>ISPF_ALIF1</name>
<organism>
    <name type="scientific">Aliivibrio fischeri (strain ATCC 700601 / ES114)</name>
    <name type="common">Vibrio fischeri</name>
    <dbReference type="NCBI Taxonomy" id="312309"/>
    <lineage>
        <taxon>Bacteria</taxon>
        <taxon>Pseudomonadati</taxon>
        <taxon>Pseudomonadota</taxon>
        <taxon>Gammaproteobacteria</taxon>
        <taxon>Vibrionales</taxon>
        <taxon>Vibrionaceae</taxon>
        <taxon>Aliivibrio</taxon>
    </lineage>
</organism>
<dbReference type="EC" id="4.6.1.12" evidence="1"/>
<dbReference type="EMBL" id="CP000020">
    <property type="protein sequence ID" value="AAW86567.1"/>
    <property type="molecule type" value="Genomic_DNA"/>
</dbReference>
<dbReference type="RefSeq" id="WP_011262539.1">
    <property type="nucleotide sequence ID" value="NC_006840.2"/>
</dbReference>
<dbReference type="RefSeq" id="YP_205455.1">
    <property type="nucleotide sequence ID" value="NC_006840.2"/>
</dbReference>
<dbReference type="SMR" id="Q5E329"/>
<dbReference type="STRING" id="312309.VF_2072"/>
<dbReference type="EnsemblBacteria" id="AAW86567">
    <property type="protein sequence ID" value="AAW86567"/>
    <property type="gene ID" value="VF_2072"/>
</dbReference>
<dbReference type="GeneID" id="54164778"/>
<dbReference type="KEGG" id="vfi:VF_2072"/>
<dbReference type="PATRIC" id="fig|312309.11.peg.2115"/>
<dbReference type="eggNOG" id="COG0245">
    <property type="taxonomic scope" value="Bacteria"/>
</dbReference>
<dbReference type="HOGENOM" id="CLU_084630_2_0_6"/>
<dbReference type="OrthoDB" id="9804336at2"/>
<dbReference type="UniPathway" id="UPA00056">
    <property type="reaction ID" value="UER00095"/>
</dbReference>
<dbReference type="Proteomes" id="UP000000537">
    <property type="component" value="Chromosome I"/>
</dbReference>
<dbReference type="GO" id="GO:0008685">
    <property type="term" value="F:2-C-methyl-D-erythritol 2,4-cyclodiphosphate synthase activity"/>
    <property type="evidence" value="ECO:0007669"/>
    <property type="project" value="UniProtKB-UniRule"/>
</dbReference>
<dbReference type="GO" id="GO:0046872">
    <property type="term" value="F:metal ion binding"/>
    <property type="evidence" value="ECO:0007669"/>
    <property type="project" value="UniProtKB-KW"/>
</dbReference>
<dbReference type="GO" id="GO:0019288">
    <property type="term" value="P:isopentenyl diphosphate biosynthetic process, methylerythritol 4-phosphate pathway"/>
    <property type="evidence" value="ECO:0007669"/>
    <property type="project" value="UniProtKB-UniRule"/>
</dbReference>
<dbReference type="GO" id="GO:0016114">
    <property type="term" value="P:terpenoid biosynthetic process"/>
    <property type="evidence" value="ECO:0007669"/>
    <property type="project" value="InterPro"/>
</dbReference>
<dbReference type="CDD" id="cd00554">
    <property type="entry name" value="MECDP_synthase"/>
    <property type="match status" value="1"/>
</dbReference>
<dbReference type="FunFam" id="3.30.1330.50:FF:000001">
    <property type="entry name" value="2-C-methyl-D-erythritol 2,4-cyclodiphosphate synthase"/>
    <property type="match status" value="1"/>
</dbReference>
<dbReference type="Gene3D" id="3.30.1330.50">
    <property type="entry name" value="2-C-methyl-D-erythritol 2,4-cyclodiphosphate synthase"/>
    <property type="match status" value="1"/>
</dbReference>
<dbReference type="HAMAP" id="MF_00107">
    <property type="entry name" value="IspF"/>
    <property type="match status" value="1"/>
</dbReference>
<dbReference type="InterPro" id="IPR003526">
    <property type="entry name" value="MECDP_synthase"/>
</dbReference>
<dbReference type="InterPro" id="IPR020555">
    <property type="entry name" value="MECDP_synthase_CS"/>
</dbReference>
<dbReference type="InterPro" id="IPR036571">
    <property type="entry name" value="MECDP_synthase_sf"/>
</dbReference>
<dbReference type="NCBIfam" id="TIGR00151">
    <property type="entry name" value="ispF"/>
    <property type="match status" value="1"/>
</dbReference>
<dbReference type="PANTHER" id="PTHR43181">
    <property type="entry name" value="2-C-METHYL-D-ERYTHRITOL 2,4-CYCLODIPHOSPHATE SYNTHASE, CHLOROPLASTIC"/>
    <property type="match status" value="1"/>
</dbReference>
<dbReference type="PANTHER" id="PTHR43181:SF1">
    <property type="entry name" value="2-C-METHYL-D-ERYTHRITOL 2,4-CYCLODIPHOSPHATE SYNTHASE, CHLOROPLASTIC"/>
    <property type="match status" value="1"/>
</dbReference>
<dbReference type="Pfam" id="PF02542">
    <property type="entry name" value="YgbB"/>
    <property type="match status" value="1"/>
</dbReference>
<dbReference type="SUPFAM" id="SSF69765">
    <property type="entry name" value="IpsF-like"/>
    <property type="match status" value="1"/>
</dbReference>
<dbReference type="PROSITE" id="PS01350">
    <property type="entry name" value="ISPF"/>
    <property type="match status" value="1"/>
</dbReference>
<proteinExistence type="inferred from homology"/>
<keyword id="KW-0414">Isoprene biosynthesis</keyword>
<keyword id="KW-0456">Lyase</keyword>
<keyword id="KW-0479">Metal-binding</keyword>
<keyword id="KW-1185">Reference proteome</keyword>
<feature type="chain" id="PRO_0000237763" description="2-C-methyl-D-erythritol 2,4-cyclodiphosphate synthase">
    <location>
        <begin position="1"/>
        <end position="158"/>
    </location>
</feature>
<feature type="binding site" evidence="1">
    <location>
        <begin position="8"/>
        <end position="10"/>
    </location>
    <ligand>
        <name>4-CDP-2-C-methyl-D-erythritol 2-phosphate</name>
        <dbReference type="ChEBI" id="CHEBI:57919"/>
    </ligand>
</feature>
<feature type="binding site" evidence="1">
    <location>
        <position position="8"/>
    </location>
    <ligand>
        <name>a divalent metal cation</name>
        <dbReference type="ChEBI" id="CHEBI:60240"/>
    </ligand>
</feature>
<feature type="binding site" evidence="1">
    <location>
        <position position="10"/>
    </location>
    <ligand>
        <name>a divalent metal cation</name>
        <dbReference type="ChEBI" id="CHEBI:60240"/>
    </ligand>
</feature>
<feature type="binding site" evidence="1">
    <location>
        <begin position="34"/>
        <end position="35"/>
    </location>
    <ligand>
        <name>4-CDP-2-C-methyl-D-erythritol 2-phosphate</name>
        <dbReference type="ChEBI" id="CHEBI:57919"/>
    </ligand>
</feature>
<feature type="binding site" evidence="1">
    <location>
        <position position="42"/>
    </location>
    <ligand>
        <name>a divalent metal cation</name>
        <dbReference type="ChEBI" id="CHEBI:60240"/>
    </ligand>
</feature>
<feature type="binding site" evidence="1">
    <location>
        <begin position="56"/>
        <end position="58"/>
    </location>
    <ligand>
        <name>4-CDP-2-C-methyl-D-erythritol 2-phosphate</name>
        <dbReference type="ChEBI" id="CHEBI:57919"/>
    </ligand>
</feature>
<feature type="binding site" evidence="1">
    <location>
        <begin position="61"/>
        <end position="65"/>
    </location>
    <ligand>
        <name>4-CDP-2-C-methyl-D-erythritol 2-phosphate</name>
        <dbReference type="ChEBI" id="CHEBI:57919"/>
    </ligand>
</feature>
<feature type="binding site" evidence="1">
    <location>
        <begin position="100"/>
        <end position="106"/>
    </location>
    <ligand>
        <name>4-CDP-2-C-methyl-D-erythritol 2-phosphate</name>
        <dbReference type="ChEBI" id="CHEBI:57919"/>
    </ligand>
</feature>
<feature type="binding site" evidence="1">
    <location>
        <begin position="132"/>
        <end position="135"/>
    </location>
    <ligand>
        <name>4-CDP-2-C-methyl-D-erythritol 2-phosphate</name>
        <dbReference type="ChEBI" id="CHEBI:57919"/>
    </ligand>
</feature>
<feature type="binding site" evidence="1">
    <location>
        <position position="139"/>
    </location>
    <ligand>
        <name>4-CDP-2-C-methyl-D-erythritol 2-phosphate</name>
        <dbReference type="ChEBI" id="CHEBI:57919"/>
    </ligand>
</feature>
<feature type="binding site" evidence="1">
    <location>
        <position position="142"/>
    </location>
    <ligand>
        <name>4-CDP-2-C-methyl-D-erythritol 2-phosphate</name>
        <dbReference type="ChEBI" id="CHEBI:57919"/>
    </ligand>
</feature>
<feature type="site" description="Transition state stabilizer" evidence="1">
    <location>
        <position position="34"/>
    </location>
</feature>
<feature type="site" description="Transition state stabilizer" evidence="1">
    <location>
        <position position="133"/>
    </location>
</feature>
<accession>Q5E329</accession>
<comment type="function">
    <text evidence="1">Involved in the biosynthesis of isopentenyl diphosphate (IPP) and dimethylallyl diphosphate (DMAPP), two major building blocks of isoprenoid compounds. Catalyzes the conversion of 4-diphosphocytidyl-2-C-methyl-D-erythritol 2-phosphate (CDP-ME2P) to 2-C-methyl-D-erythritol 2,4-cyclodiphosphate (ME-CPP) with a corresponding release of cytidine 5-monophosphate (CMP).</text>
</comment>
<comment type="catalytic activity">
    <reaction evidence="1">
        <text>4-CDP-2-C-methyl-D-erythritol 2-phosphate = 2-C-methyl-D-erythritol 2,4-cyclic diphosphate + CMP</text>
        <dbReference type="Rhea" id="RHEA:23864"/>
        <dbReference type="ChEBI" id="CHEBI:57919"/>
        <dbReference type="ChEBI" id="CHEBI:58483"/>
        <dbReference type="ChEBI" id="CHEBI:60377"/>
        <dbReference type="EC" id="4.6.1.12"/>
    </reaction>
</comment>
<comment type="cofactor">
    <cofactor evidence="1">
        <name>a divalent metal cation</name>
        <dbReference type="ChEBI" id="CHEBI:60240"/>
    </cofactor>
    <text evidence="1">Binds 1 divalent metal cation per subunit.</text>
</comment>
<comment type="pathway">
    <text evidence="1">Isoprenoid biosynthesis; isopentenyl diphosphate biosynthesis via DXP pathway; isopentenyl diphosphate from 1-deoxy-D-xylulose 5-phosphate: step 4/6.</text>
</comment>
<comment type="subunit">
    <text evidence="1">Homotrimer.</text>
</comment>
<comment type="similarity">
    <text evidence="1">Belongs to the IspF family.</text>
</comment>
<sequence length="158" mass="16830">MRIGHGFDVHKFGGEGPVIIGGVSVPYEQGLIAHSDGDVALHALCDALLGAIAEGDIGRHFPDTDDKWKGADSRALLRDVYRRVKEKGFALGNADVTIIAQAPKMAPYIQAMCNAIAEDLETELDNVNVKATTSERLGFTGRKEGIACEAVVLLVKAS</sequence>
<evidence type="ECO:0000255" key="1">
    <source>
        <dbReference type="HAMAP-Rule" id="MF_00107"/>
    </source>
</evidence>
<gene>
    <name evidence="1" type="primary">ispF</name>
    <name type="ordered locus">VF_2072</name>
</gene>